<keyword id="KW-1003">Cell membrane</keyword>
<keyword id="KW-0472">Membrane</keyword>
<keyword id="KW-0653">Protein transport</keyword>
<keyword id="KW-0811">Translocation</keyword>
<keyword id="KW-0812">Transmembrane</keyword>
<keyword id="KW-1133">Transmembrane helix</keyword>
<keyword id="KW-0813">Transport</keyword>
<proteinExistence type="inferred from homology"/>
<reference key="1">
    <citation type="journal article" date="2008" name="Chem. Biol. Interact.">
        <title>Extending the Bacillus cereus group genomics to putative food-borne pathogens of different toxicity.</title>
        <authorList>
            <person name="Lapidus A."/>
            <person name="Goltsman E."/>
            <person name="Auger S."/>
            <person name="Galleron N."/>
            <person name="Segurens B."/>
            <person name="Dossat C."/>
            <person name="Land M.L."/>
            <person name="Broussolle V."/>
            <person name="Brillard J."/>
            <person name="Guinebretiere M.-H."/>
            <person name="Sanchis V."/>
            <person name="Nguen-the C."/>
            <person name="Lereclus D."/>
            <person name="Richardson P."/>
            <person name="Wincker P."/>
            <person name="Weissenbach J."/>
            <person name="Ehrlich S.D."/>
            <person name="Sorokin A."/>
        </authorList>
    </citation>
    <scope>NUCLEOTIDE SEQUENCE [LARGE SCALE GENOMIC DNA]</scope>
    <source>
        <strain>KBAB4</strain>
    </source>
</reference>
<dbReference type="EMBL" id="CP000903">
    <property type="protein sequence ID" value="ABY43292.1"/>
    <property type="molecule type" value="Genomic_DNA"/>
</dbReference>
<dbReference type="RefSeq" id="WP_002012719.1">
    <property type="nucleotide sequence ID" value="NZ_CAKMRX030000088.1"/>
</dbReference>
<dbReference type="SMR" id="A9VTX6"/>
<dbReference type="KEGG" id="bwe:BcerKBAB4_2067"/>
<dbReference type="eggNOG" id="COG1826">
    <property type="taxonomic scope" value="Bacteria"/>
</dbReference>
<dbReference type="HOGENOM" id="CLU_086034_6_0_9"/>
<dbReference type="Proteomes" id="UP000002154">
    <property type="component" value="Chromosome"/>
</dbReference>
<dbReference type="GO" id="GO:0033281">
    <property type="term" value="C:TAT protein transport complex"/>
    <property type="evidence" value="ECO:0007669"/>
    <property type="project" value="UniProtKB-UniRule"/>
</dbReference>
<dbReference type="GO" id="GO:0008320">
    <property type="term" value="F:protein transmembrane transporter activity"/>
    <property type="evidence" value="ECO:0007669"/>
    <property type="project" value="UniProtKB-UniRule"/>
</dbReference>
<dbReference type="GO" id="GO:0043953">
    <property type="term" value="P:protein transport by the Tat complex"/>
    <property type="evidence" value="ECO:0007669"/>
    <property type="project" value="UniProtKB-UniRule"/>
</dbReference>
<dbReference type="Gene3D" id="1.20.5.3310">
    <property type="match status" value="1"/>
</dbReference>
<dbReference type="HAMAP" id="MF_00236">
    <property type="entry name" value="TatA_E"/>
    <property type="match status" value="1"/>
</dbReference>
<dbReference type="InterPro" id="IPR003369">
    <property type="entry name" value="TatA/B/E"/>
</dbReference>
<dbReference type="InterPro" id="IPR006312">
    <property type="entry name" value="TatA/E"/>
</dbReference>
<dbReference type="NCBIfam" id="NF011430">
    <property type="entry name" value="PRK14861.1"/>
    <property type="match status" value="1"/>
</dbReference>
<dbReference type="NCBIfam" id="TIGR01411">
    <property type="entry name" value="tatAE"/>
    <property type="match status" value="1"/>
</dbReference>
<dbReference type="PANTHER" id="PTHR42982">
    <property type="entry name" value="SEC-INDEPENDENT PROTEIN TRANSLOCASE PROTEIN TATA"/>
    <property type="match status" value="1"/>
</dbReference>
<dbReference type="PANTHER" id="PTHR42982:SF1">
    <property type="entry name" value="SEC-INDEPENDENT PROTEIN TRANSLOCASE PROTEIN TATA"/>
    <property type="match status" value="1"/>
</dbReference>
<dbReference type="Pfam" id="PF02416">
    <property type="entry name" value="TatA_B_E"/>
    <property type="match status" value="1"/>
</dbReference>
<dbReference type="PRINTS" id="PR01506">
    <property type="entry name" value="TATBPROTEIN"/>
</dbReference>
<organism>
    <name type="scientific">Bacillus mycoides (strain KBAB4)</name>
    <name type="common">Bacillus weihenstephanensis</name>
    <dbReference type="NCBI Taxonomy" id="315730"/>
    <lineage>
        <taxon>Bacteria</taxon>
        <taxon>Bacillati</taxon>
        <taxon>Bacillota</taxon>
        <taxon>Bacilli</taxon>
        <taxon>Bacillales</taxon>
        <taxon>Bacillaceae</taxon>
        <taxon>Bacillus</taxon>
        <taxon>Bacillus cereus group</taxon>
    </lineage>
</organism>
<comment type="function">
    <text evidence="1">Part of the twin-arginine translocation (Tat) system that transports large folded proteins containing a characteristic twin-arginine motif in their signal peptide across membranes. TatA could form the protein-conducting channel of the Tat system.</text>
</comment>
<comment type="subunit">
    <text evidence="1">Forms a complex with TatC.</text>
</comment>
<comment type="subcellular location">
    <subcellularLocation>
        <location evidence="1">Cell membrane</location>
        <topology evidence="1">Single-pass membrane protein</topology>
    </subcellularLocation>
</comment>
<comment type="similarity">
    <text evidence="1">Belongs to the TatA/E family.</text>
</comment>
<sequence length="59" mass="6592">MFSNIGFPGLILILVAVLILFGPKKLPEIGKALGETLKEFKKSTKELTDEAFQEKEKNK</sequence>
<evidence type="ECO:0000255" key="1">
    <source>
        <dbReference type="HAMAP-Rule" id="MF_00236"/>
    </source>
</evidence>
<protein>
    <recommendedName>
        <fullName evidence="1">Sec-independent protein translocase protein TatA</fullName>
    </recommendedName>
</protein>
<feature type="chain" id="PRO_1000125194" description="Sec-independent protein translocase protein TatA">
    <location>
        <begin position="1"/>
        <end position="59"/>
    </location>
</feature>
<feature type="transmembrane region" description="Helical" evidence="1">
    <location>
        <begin position="1"/>
        <end position="21"/>
    </location>
</feature>
<name>TATA_BACMK</name>
<accession>A9VTX6</accession>
<gene>
    <name evidence="1" type="primary">tatA</name>
    <name type="ordered locus">BcerKBAB4_2067</name>
</gene>